<accession>Q5K5C1</accession>
<name>CASP_SFAVA</name>
<organism>
    <name type="scientific">Spodoptera frugiperda ascovirus 1a</name>
    <name type="common">SfAV-1a</name>
    <dbReference type="NCBI Taxonomy" id="113370"/>
    <lineage>
        <taxon>Viruses</taxon>
        <taxon>Varidnaviria</taxon>
        <taxon>Bamfordvirae</taxon>
        <taxon>Nucleocytoviricota</taxon>
        <taxon>Megaviricetes</taxon>
        <taxon>Pimascovirales</taxon>
        <taxon>Ascoviridae</taxon>
        <taxon>Ascovirus</taxon>
        <taxon>Ascovirus sfav1a</taxon>
    </lineage>
</organism>
<dbReference type="EC" id="3.4.22.-"/>
<dbReference type="EMBL" id="AJ437059">
    <property type="protein sequence ID" value="CAD24627.1"/>
    <property type="molecule type" value="Genomic_DNA"/>
</dbReference>
<dbReference type="EMBL" id="AJ620301">
    <property type="protein sequence ID" value="CAF04324.1"/>
    <property type="molecule type" value="Genomic_DNA"/>
</dbReference>
<dbReference type="EMBL" id="AM398843">
    <property type="protein sequence ID" value="CAL44673.1"/>
    <property type="molecule type" value="Genomic_DNA"/>
</dbReference>
<dbReference type="SMR" id="Q5K5C1"/>
<dbReference type="MEROPS" id="C14.037"/>
<dbReference type="KEGG" id="vg:4306239"/>
<dbReference type="OrthoDB" id="33723at10239"/>
<dbReference type="Proteomes" id="UP000008030">
    <property type="component" value="Genome"/>
</dbReference>
<dbReference type="GO" id="GO:0004197">
    <property type="term" value="F:cysteine-type endopeptidase activity"/>
    <property type="evidence" value="ECO:0007669"/>
    <property type="project" value="InterPro"/>
</dbReference>
<dbReference type="GO" id="GO:0006508">
    <property type="term" value="P:proteolysis"/>
    <property type="evidence" value="ECO:0007669"/>
    <property type="project" value="UniProtKB-KW"/>
</dbReference>
<dbReference type="Gene3D" id="3.40.50.1460">
    <property type="match status" value="1"/>
</dbReference>
<dbReference type="InterPro" id="IPR029030">
    <property type="entry name" value="Caspase-like_dom_sf"/>
</dbReference>
<dbReference type="InterPro" id="IPR011600">
    <property type="entry name" value="Pept_C14_caspase"/>
</dbReference>
<dbReference type="InterPro" id="IPR001309">
    <property type="entry name" value="Pept_C14_p20"/>
</dbReference>
<dbReference type="InterPro" id="IPR015917">
    <property type="entry name" value="Pept_C14A"/>
</dbReference>
<dbReference type="Pfam" id="PF00656">
    <property type="entry name" value="Peptidase_C14"/>
    <property type="match status" value="1"/>
</dbReference>
<dbReference type="SMART" id="SM00115">
    <property type="entry name" value="CASc"/>
    <property type="match status" value="1"/>
</dbReference>
<dbReference type="SUPFAM" id="SSF52129">
    <property type="entry name" value="Caspase-like"/>
    <property type="match status" value="1"/>
</dbReference>
<dbReference type="PROSITE" id="PS50208">
    <property type="entry name" value="CASPASE_P20"/>
    <property type="match status" value="1"/>
</dbReference>
<comment type="function">
    <text evidence="1">May induce host cell apoptosis and contribute of the establishment of a special cell cleavage process in which apoppotic bodies are rescued by the virus and differentiate to form large vesicles in which virion assembles.</text>
</comment>
<comment type="induction">
    <text>Synthesized 9 hours after infection of cells ex vivo.</text>
</comment>
<comment type="similarity">
    <text evidence="2">Belongs to the peptidase C14A family.</text>
</comment>
<feature type="chain" id="PRO_0000329067" description="Executioner caspase">
    <location>
        <begin position="1"/>
        <end position="288"/>
    </location>
</feature>
<feature type="active site">
    <location>
        <position position="131"/>
    </location>
</feature>
<reference key="1">
    <citation type="journal article" date="2003" name="J. Gen. Virol.">
        <title>Evidence for the evolution of ascoviruses from iridoviruses.</title>
        <authorList>
            <person name="Stasiak K."/>
            <person name="Renault S."/>
            <person name="Demattei M.V."/>
            <person name="Bigot Y."/>
            <person name="Federici B.A."/>
        </authorList>
    </citation>
    <scope>NUCLEOTIDE SEQUENCE [GENOMIC DNA]</scope>
</reference>
<reference key="2">
    <citation type="journal article" date="2005" name="Genes Dev.">
        <title>A viral caspase contributes to modified apoptosis for virus transmission.</title>
        <authorList>
            <person name="Bideshi D.K."/>
            <person name="Tan Y."/>
            <person name="Bigot Y."/>
            <person name="Federici B.A."/>
        </authorList>
    </citation>
    <scope>NUCLEOTIDE SEQUENCE [GENOMIC DNA]</scope>
    <scope>FUNCTION</scope>
</reference>
<reference key="3">
    <citation type="journal article" date="2006" name="J. Virol.">
        <title>Genomic sequence of Spodoptera frugiperda Ascovirus 1a, an enveloped, double-stranded DNA insect virus that manipulates apoptosis for viral reproduction.</title>
        <authorList>
            <person name="Bideshi D.K."/>
            <person name="Demattei M.V."/>
            <person name="Rouleux-Bonnin F."/>
            <person name="Stasiak K."/>
            <person name="Tan Y."/>
            <person name="Bigot S."/>
            <person name="Bigot Y."/>
            <person name="Federici B.A."/>
        </authorList>
    </citation>
    <scope>NUCLEOTIDE SEQUENCE [LARGE SCALE GENOMIC DNA]</scope>
</reference>
<gene>
    <name type="ORF">ORF73</name>
</gene>
<protein>
    <recommendedName>
        <fullName>Executioner caspase</fullName>
        <ecNumber>3.4.22.-</ecNumber>
    </recommendedName>
</protein>
<keyword id="KW-0053">Apoptosis</keyword>
<keyword id="KW-0378">Hydrolase</keyword>
<keyword id="KW-0645">Protease</keyword>
<keyword id="KW-1185">Reference proteome</keyword>
<keyword id="KW-0788">Thiol protease</keyword>
<proteinExistence type="evidence at transcript level"/>
<organismHost>
    <name type="scientific">Spodoptera frugiperda</name>
    <name type="common">Fall armyworm</name>
    <dbReference type="NCBI Taxonomy" id="7108"/>
</organismHost>
<evidence type="ECO:0000269" key="1">
    <source>
    </source>
</evidence>
<evidence type="ECO:0000305" key="2"/>
<sequence>MSICYYDTVGREKRLLIINQRALALPNRTISSDGTCCDGDEYLLVDTFTKLNFKVQTIRNASKIVLETTVRNYIEKNVKRVACYFVVVLNDGNDADTILTTDGTYSLSELYALFTLYTVRAIPKVFLIQSCLGAKIDRSHCDRASCQCDQEEDAHPTSVCHDIFVNTVRRVIHACSRKSNGSTTTTETKCSDVATVVLTSPHTEETIIVYLRIEAYLRYGDTKCGCFMIEKFCKNLIKYGTRSSVHTTITMVQNEMQITDPKHVPIVQMNCTKLLFLGDENHIIMEEY</sequence>